<sequence>MDQVHHRALDALQSFIALTDSSSATSPRYIASIITNATSSPHTYVFAELLERPAVQALRSPDTPAEFQSYLTLLEIFAWGTWQDYQQTPNLPPLSEEQARKLRLLTLLSLASTIKPLTYEALMTSLSLSAPSELESLVTTAIYSSLITGRLSPATNPPTVNVTSVAPLRDVKPSSLPTMISTLTAWEARCGSVISDIETEIAKIRADSAQRRQKEHARAVAIEKTLEKWNAEGGEQLQGGNPGQGQGQGQGGLGKNAGWKPRDLSTAMFERGFFGGGSNKREFDDDGYFDGGSSDFDQHGSGMDIDEGAGARASGARHSKRFLGKKS</sequence>
<reference key="1">
    <citation type="journal article" date="1995" name="Microbiology">
        <title>A pre-induction sporulation gene from Aspergillus nidulans.</title>
        <authorList>
            <person name="Lewis C."/>
            <person name="Champe S.P."/>
        </authorList>
    </citation>
    <scope>NUCLEOTIDE SEQUENCE [MRNA]</scope>
    <scope>TISSUE SPECIFICITY</scope>
    <source>
        <strain>FGSC A4 / ATCC 38163 / CBS 112.46 / NRRL 194 / M139</strain>
    </source>
</reference>
<reference key="2">
    <citation type="journal article" date="2005" name="Nature">
        <title>Sequencing of Aspergillus nidulans and comparative analysis with A. fumigatus and A. oryzae.</title>
        <authorList>
            <person name="Galagan J.E."/>
            <person name="Calvo S.E."/>
            <person name="Cuomo C."/>
            <person name="Ma L.-J."/>
            <person name="Wortman J.R."/>
            <person name="Batzoglou S."/>
            <person name="Lee S.-I."/>
            <person name="Bastuerkmen M."/>
            <person name="Spevak C.C."/>
            <person name="Clutterbuck J."/>
            <person name="Kapitonov V."/>
            <person name="Jurka J."/>
            <person name="Scazzocchio C."/>
            <person name="Farman M.L."/>
            <person name="Butler J."/>
            <person name="Purcell S."/>
            <person name="Harris S."/>
            <person name="Braus G.H."/>
            <person name="Draht O."/>
            <person name="Busch S."/>
            <person name="D'Enfert C."/>
            <person name="Bouchier C."/>
            <person name="Goldman G.H."/>
            <person name="Bell-Pedersen D."/>
            <person name="Griffiths-Jones S."/>
            <person name="Doonan J.H."/>
            <person name="Yu J."/>
            <person name="Vienken K."/>
            <person name="Pain A."/>
            <person name="Freitag M."/>
            <person name="Selker E.U."/>
            <person name="Archer D.B."/>
            <person name="Penalva M.A."/>
            <person name="Oakley B.R."/>
            <person name="Momany M."/>
            <person name="Tanaka T."/>
            <person name="Kumagai T."/>
            <person name="Asai K."/>
            <person name="Machida M."/>
            <person name="Nierman W.C."/>
            <person name="Denning D.W."/>
            <person name="Caddick M.X."/>
            <person name="Hynes M."/>
            <person name="Paoletti M."/>
            <person name="Fischer R."/>
            <person name="Miller B.L."/>
            <person name="Dyer P.S."/>
            <person name="Sachs M.S."/>
            <person name="Osmani S.A."/>
            <person name="Birren B.W."/>
        </authorList>
    </citation>
    <scope>NUCLEOTIDE SEQUENCE [LARGE SCALE GENOMIC DNA]</scope>
    <source>
        <strain>FGSC A4 / ATCC 38163 / CBS 112.46 / NRRL 194 / M139</strain>
    </source>
</reference>
<reference key="3">
    <citation type="journal article" date="2009" name="Fungal Genet. Biol.">
        <title>The 2008 update of the Aspergillus nidulans genome annotation: a community effort.</title>
        <authorList>
            <person name="Wortman J.R."/>
            <person name="Gilsenan J.M."/>
            <person name="Joardar V."/>
            <person name="Deegan J."/>
            <person name="Clutterbuck J."/>
            <person name="Andersen M.R."/>
            <person name="Archer D."/>
            <person name="Bencina M."/>
            <person name="Braus G."/>
            <person name="Coutinho P."/>
            <person name="von Dohren H."/>
            <person name="Doonan J."/>
            <person name="Driessen A.J."/>
            <person name="Durek P."/>
            <person name="Espeso E."/>
            <person name="Fekete E."/>
            <person name="Flipphi M."/>
            <person name="Estrada C.G."/>
            <person name="Geysens S."/>
            <person name="Goldman G."/>
            <person name="de Groot P.W."/>
            <person name="Hansen K."/>
            <person name="Harris S.D."/>
            <person name="Heinekamp T."/>
            <person name="Helmstaedt K."/>
            <person name="Henrissat B."/>
            <person name="Hofmann G."/>
            <person name="Homan T."/>
            <person name="Horio T."/>
            <person name="Horiuchi H."/>
            <person name="James S."/>
            <person name="Jones M."/>
            <person name="Karaffa L."/>
            <person name="Karanyi Z."/>
            <person name="Kato M."/>
            <person name="Keller N."/>
            <person name="Kelly D.E."/>
            <person name="Kiel J.A."/>
            <person name="Kim J.M."/>
            <person name="van der Klei I.J."/>
            <person name="Klis F.M."/>
            <person name="Kovalchuk A."/>
            <person name="Krasevec N."/>
            <person name="Kubicek C.P."/>
            <person name="Liu B."/>
            <person name="Maccabe A."/>
            <person name="Meyer V."/>
            <person name="Mirabito P."/>
            <person name="Miskei M."/>
            <person name="Mos M."/>
            <person name="Mullins J."/>
            <person name="Nelson D.R."/>
            <person name="Nielsen J."/>
            <person name="Oakley B.R."/>
            <person name="Osmani S.A."/>
            <person name="Pakula T."/>
            <person name="Paszewski A."/>
            <person name="Paulsen I."/>
            <person name="Pilsyk S."/>
            <person name="Pocsi I."/>
            <person name="Punt P.J."/>
            <person name="Ram A.F."/>
            <person name="Ren Q."/>
            <person name="Robellet X."/>
            <person name="Robson G."/>
            <person name="Seiboth B."/>
            <person name="van Solingen P."/>
            <person name="Specht T."/>
            <person name="Sun J."/>
            <person name="Taheri-Talesh N."/>
            <person name="Takeshita N."/>
            <person name="Ussery D."/>
            <person name="vanKuyk P.A."/>
            <person name="Visser H."/>
            <person name="van de Vondervoort P.J."/>
            <person name="de Vries R.P."/>
            <person name="Walton J."/>
            <person name="Xiang X."/>
            <person name="Xiong Y."/>
            <person name="Zeng A.P."/>
            <person name="Brandt B.W."/>
            <person name="Cornell M.J."/>
            <person name="van den Hondel C.A."/>
            <person name="Visser J."/>
            <person name="Oliver S.G."/>
            <person name="Turner G."/>
        </authorList>
    </citation>
    <scope>GENOME REANNOTATION</scope>
    <source>
        <strain>FGSC A4 / ATCC 38163 / CBS 112.46 / NRRL 194 / M139</strain>
    </source>
</reference>
<reference key="4">
    <citation type="journal article" date="2007" name="Proc. Natl. Acad. Sci. U.S.A.">
        <title>An eight-subunit COP9 signalosome with an intact JAMM motif is required for fungal fruit body formation.</title>
        <authorList>
            <person name="Busch S."/>
            <person name="Schwier E.U."/>
            <person name="Nahlik K."/>
            <person name="Bayram O."/>
            <person name="Helmstaedt K."/>
            <person name="Draht O.W."/>
            <person name="Krappmann S."/>
            <person name="Valerius O."/>
            <person name="Lipscomb W.N."/>
            <person name="Braus G.H."/>
        </authorList>
    </citation>
    <scope>IDENTIFICATION IN THE CSN COMPLEX</scope>
    <scope>IDENTIFICATION BY MASS SPECTROMETRY</scope>
</reference>
<protein>
    <recommendedName>
        <fullName>COP9 signalosome complex subunit 7</fullName>
        <shortName>CSN complex subunit 7</shortName>
    </recommendedName>
</protein>
<feature type="chain" id="PRO_0000314736" description="COP9 signalosome complex subunit 7">
    <location>
        <begin position="1"/>
        <end position="327"/>
    </location>
</feature>
<feature type="domain" description="PCI" evidence="2">
    <location>
        <begin position="4"/>
        <end position="165"/>
    </location>
</feature>
<feature type="region of interest" description="Disordered" evidence="3">
    <location>
        <begin position="233"/>
        <end position="260"/>
    </location>
</feature>
<feature type="region of interest" description="Disordered" evidence="3">
    <location>
        <begin position="276"/>
        <end position="327"/>
    </location>
</feature>
<feature type="compositionally biased region" description="Gly residues" evidence="3">
    <location>
        <begin position="236"/>
        <end position="255"/>
    </location>
</feature>
<feature type="compositionally biased region" description="Basic residues" evidence="3">
    <location>
        <begin position="315"/>
        <end position="327"/>
    </location>
</feature>
<comment type="function">
    <text evidence="1">Component of the COP9 signalosome (CSN) complex that acts as an regulator of the ubiquitin (Ubl) conjugation pathway by mediating the deneddylation of the cullin subunit of SCF-type E3 ubiquitin-protein ligase complexes (By similarity). The CSN complex seems to link protein degradation to sexual development. May be required for sporulation only at elevated temperatures.</text>
</comment>
<comment type="subunit">
    <text evidence="4">Component of the COP9 signalosome (CSN) complex.</text>
</comment>
<comment type="subcellular location">
    <subcellularLocation>
        <location evidence="1">Cytoplasm</location>
    </subcellularLocation>
    <subcellularLocation>
        <location evidence="1">Nucleus</location>
    </subcellularLocation>
</comment>
<comment type="tissue specificity">
    <text evidence="5">Present in uninduced vegetative hyphae, induced conidiating cultures and in both conidiospores and ascospores.</text>
</comment>
<comment type="similarity">
    <text evidence="6">Belongs to the CSN7/EIF3M family. CSN7 subfamily.</text>
</comment>
<dbReference type="EMBL" id="U18265">
    <property type="protein sequence ID" value="AAA85690.1"/>
    <property type="molecule type" value="mRNA"/>
</dbReference>
<dbReference type="EMBL" id="AACD01000061">
    <property type="protein sequence ID" value="EAA59831.1"/>
    <property type="molecule type" value="Genomic_DNA"/>
</dbReference>
<dbReference type="EMBL" id="BN001302">
    <property type="protein sequence ID" value="CBF75752.1"/>
    <property type="molecule type" value="Genomic_DNA"/>
</dbReference>
<dbReference type="RefSeq" id="XP_661227.1">
    <property type="nucleotide sequence ID" value="XM_656135.1"/>
</dbReference>
<dbReference type="SMR" id="Q00648"/>
<dbReference type="DIP" id="DIP-60931N"/>
<dbReference type="IntAct" id="Q00648">
    <property type="interactions" value="4"/>
</dbReference>
<dbReference type="STRING" id="227321.Q00648"/>
<dbReference type="EnsemblFungi" id="CBF75752">
    <property type="protein sequence ID" value="CBF75752"/>
    <property type="gene ID" value="ANIA_03623"/>
</dbReference>
<dbReference type="KEGG" id="ani:ANIA_03623"/>
<dbReference type="VEuPathDB" id="FungiDB:AN3623"/>
<dbReference type="eggNOG" id="KOG3250">
    <property type="taxonomic scope" value="Eukaryota"/>
</dbReference>
<dbReference type="HOGENOM" id="CLU_054426_0_0_1"/>
<dbReference type="InParanoid" id="Q00648"/>
<dbReference type="OMA" id="GTYKQFR"/>
<dbReference type="OrthoDB" id="10265275at2759"/>
<dbReference type="Proteomes" id="UP000000560">
    <property type="component" value="Chromosome II"/>
</dbReference>
<dbReference type="GO" id="GO:0008180">
    <property type="term" value="C:COP9 signalosome"/>
    <property type="evidence" value="ECO:0000314"/>
    <property type="project" value="AspGD"/>
</dbReference>
<dbReference type="GO" id="GO:0005737">
    <property type="term" value="C:cytoplasm"/>
    <property type="evidence" value="ECO:0007669"/>
    <property type="project" value="UniProtKB-SubCell"/>
</dbReference>
<dbReference type="GO" id="GO:0070791">
    <property type="term" value="P:cleistothecium development"/>
    <property type="evidence" value="ECO:0000353"/>
    <property type="project" value="AspGD"/>
</dbReference>
<dbReference type="InterPro" id="IPR045237">
    <property type="entry name" value="COPS7/eIF3m"/>
</dbReference>
<dbReference type="InterPro" id="IPR000717">
    <property type="entry name" value="PCI_dom"/>
</dbReference>
<dbReference type="PANTHER" id="PTHR15350:SF5">
    <property type="entry name" value="COP9 SIGNALOSOME COMPLEX SUBUNIT 7"/>
    <property type="match status" value="1"/>
</dbReference>
<dbReference type="PANTHER" id="PTHR15350">
    <property type="entry name" value="COP9 SIGNALOSOME COMPLEX SUBUNIT 7/DENDRITIC CELL PROTEIN GA17"/>
    <property type="match status" value="1"/>
</dbReference>
<dbReference type="Pfam" id="PF22061">
    <property type="entry name" value="CSN7_HB_subdom"/>
    <property type="match status" value="1"/>
</dbReference>
<dbReference type="Pfam" id="PF01399">
    <property type="entry name" value="PCI"/>
    <property type="match status" value="1"/>
</dbReference>
<dbReference type="SMART" id="SM00088">
    <property type="entry name" value="PINT"/>
    <property type="match status" value="1"/>
</dbReference>
<dbReference type="PROSITE" id="PS50250">
    <property type="entry name" value="PCI"/>
    <property type="match status" value="1"/>
</dbReference>
<keyword id="KW-0963">Cytoplasm</keyword>
<keyword id="KW-0539">Nucleus</keyword>
<keyword id="KW-1185">Reference proteome</keyword>
<keyword id="KW-0736">Signalosome</keyword>
<name>CSN7_EMENI</name>
<accession>Q00648</accession>
<accession>C8V452</accession>
<accession>Q5B757</accession>
<organism>
    <name type="scientific">Emericella nidulans (strain FGSC A4 / ATCC 38163 / CBS 112.46 / NRRL 194 / M139)</name>
    <name type="common">Aspergillus nidulans</name>
    <dbReference type="NCBI Taxonomy" id="227321"/>
    <lineage>
        <taxon>Eukaryota</taxon>
        <taxon>Fungi</taxon>
        <taxon>Dikarya</taxon>
        <taxon>Ascomycota</taxon>
        <taxon>Pezizomycotina</taxon>
        <taxon>Eurotiomycetes</taxon>
        <taxon>Eurotiomycetidae</taxon>
        <taxon>Eurotiales</taxon>
        <taxon>Aspergillaceae</taxon>
        <taxon>Aspergillus</taxon>
        <taxon>Aspergillus subgen. Nidulantes</taxon>
    </lineage>
</organism>
<proteinExistence type="evidence at protein level"/>
<gene>
    <name type="primary">csnG</name>
    <name type="synonym">acoB</name>
    <name type="synonym">csn7</name>
    <name type="ORF">AN3623</name>
</gene>
<evidence type="ECO:0000250" key="1"/>
<evidence type="ECO:0000255" key="2">
    <source>
        <dbReference type="PROSITE-ProRule" id="PRU01185"/>
    </source>
</evidence>
<evidence type="ECO:0000256" key="3">
    <source>
        <dbReference type="SAM" id="MobiDB-lite"/>
    </source>
</evidence>
<evidence type="ECO:0000269" key="4">
    <source>
    </source>
</evidence>
<evidence type="ECO:0000269" key="5">
    <source>
    </source>
</evidence>
<evidence type="ECO:0000305" key="6"/>